<comment type="function">
    <text evidence="1">This is one of the proteins that bind and probably mediate the attachment of the 5S RNA into the large ribosomal subunit, where it forms part of the central protuberance.</text>
</comment>
<comment type="subunit">
    <text evidence="1">Part of the 50S ribosomal subunit; part of the 5S rRNA/L5/L18/L25 subcomplex. Contacts the 5S and 23S rRNAs.</text>
</comment>
<comment type="similarity">
    <text evidence="1">Belongs to the universal ribosomal protein uL18 family.</text>
</comment>
<evidence type="ECO:0000255" key="1">
    <source>
        <dbReference type="HAMAP-Rule" id="MF_01337"/>
    </source>
</evidence>
<evidence type="ECO:0000305" key="2"/>
<proteinExistence type="inferred from homology"/>
<accession>A2SLE1</accession>
<reference key="1">
    <citation type="journal article" date="2007" name="J. Bacteriol.">
        <title>Whole-genome analysis of the methyl tert-butyl ether-degrading beta-proteobacterium Methylibium petroleiphilum PM1.</title>
        <authorList>
            <person name="Kane S.R."/>
            <person name="Chakicherla A.Y."/>
            <person name="Chain P.S.G."/>
            <person name="Schmidt R."/>
            <person name="Shin M.W."/>
            <person name="Legler T.C."/>
            <person name="Scow K.M."/>
            <person name="Larimer F.W."/>
            <person name="Lucas S.M."/>
            <person name="Richardson P.M."/>
            <person name="Hristova K.R."/>
        </authorList>
    </citation>
    <scope>NUCLEOTIDE SEQUENCE [LARGE SCALE GENOMIC DNA]</scope>
    <source>
        <strain>ATCC BAA-1232 / LMG 22953 / PM1</strain>
    </source>
</reference>
<feature type="chain" id="PRO_1000053060" description="Large ribosomal subunit protein uL18">
    <location>
        <begin position="1"/>
        <end position="121"/>
    </location>
</feature>
<keyword id="KW-1185">Reference proteome</keyword>
<keyword id="KW-0687">Ribonucleoprotein</keyword>
<keyword id="KW-0689">Ribosomal protein</keyword>
<keyword id="KW-0694">RNA-binding</keyword>
<keyword id="KW-0699">rRNA-binding</keyword>
<name>RL18_METPP</name>
<sequence length="121" mass="13021">MLNRKDQRLRRSKQTRVRIALQKVARLTVFRSNLHIYASVISDDGSKVLASASTAEKEVRARLGAAGKGGNTEAAALIGKRIAERAKAAGIESVAFDRGGFAYHGRVKALAEAAREAGLQF</sequence>
<protein>
    <recommendedName>
        <fullName evidence="1">Large ribosomal subunit protein uL18</fullName>
    </recommendedName>
    <alternativeName>
        <fullName evidence="2">50S ribosomal protein L18</fullName>
    </alternativeName>
</protein>
<dbReference type="EMBL" id="CP000555">
    <property type="protein sequence ID" value="ABM96380.1"/>
    <property type="molecule type" value="Genomic_DNA"/>
</dbReference>
<dbReference type="RefSeq" id="WP_011831001.1">
    <property type="nucleotide sequence ID" value="NC_008825.1"/>
</dbReference>
<dbReference type="SMR" id="A2SLE1"/>
<dbReference type="STRING" id="420662.Mpe_A3427"/>
<dbReference type="KEGG" id="mpt:Mpe_A3427"/>
<dbReference type="eggNOG" id="COG0256">
    <property type="taxonomic scope" value="Bacteria"/>
</dbReference>
<dbReference type="HOGENOM" id="CLU_098841_0_1_4"/>
<dbReference type="Proteomes" id="UP000000366">
    <property type="component" value="Chromosome"/>
</dbReference>
<dbReference type="GO" id="GO:0022625">
    <property type="term" value="C:cytosolic large ribosomal subunit"/>
    <property type="evidence" value="ECO:0007669"/>
    <property type="project" value="TreeGrafter"/>
</dbReference>
<dbReference type="GO" id="GO:0008097">
    <property type="term" value="F:5S rRNA binding"/>
    <property type="evidence" value="ECO:0007669"/>
    <property type="project" value="TreeGrafter"/>
</dbReference>
<dbReference type="GO" id="GO:0003735">
    <property type="term" value="F:structural constituent of ribosome"/>
    <property type="evidence" value="ECO:0007669"/>
    <property type="project" value="InterPro"/>
</dbReference>
<dbReference type="GO" id="GO:0006412">
    <property type="term" value="P:translation"/>
    <property type="evidence" value="ECO:0007669"/>
    <property type="project" value="UniProtKB-UniRule"/>
</dbReference>
<dbReference type="CDD" id="cd00432">
    <property type="entry name" value="Ribosomal_L18_L5e"/>
    <property type="match status" value="1"/>
</dbReference>
<dbReference type="FunFam" id="3.30.420.100:FF:000001">
    <property type="entry name" value="50S ribosomal protein L18"/>
    <property type="match status" value="1"/>
</dbReference>
<dbReference type="Gene3D" id="3.30.420.100">
    <property type="match status" value="1"/>
</dbReference>
<dbReference type="HAMAP" id="MF_01337_B">
    <property type="entry name" value="Ribosomal_uL18_B"/>
    <property type="match status" value="1"/>
</dbReference>
<dbReference type="InterPro" id="IPR004389">
    <property type="entry name" value="Ribosomal_uL18_bac-type"/>
</dbReference>
<dbReference type="InterPro" id="IPR005484">
    <property type="entry name" value="Ribosomal_uL18_bac/euk"/>
</dbReference>
<dbReference type="NCBIfam" id="TIGR00060">
    <property type="entry name" value="L18_bact"/>
    <property type="match status" value="1"/>
</dbReference>
<dbReference type="PANTHER" id="PTHR12899">
    <property type="entry name" value="39S RIBOSOMAL PROTEIN L18, MITOCHONDRIAL"/>
    <property type="match status" value="1"/>
</dbReference>
<dbReference type="PANTHER" id="PTHR12899:SF3">
    <property type="entry name" value="LARGE RIBOSOMAL SUBUNIT PROTEIN UL18M"/>
    <property type="match status" value="1"/>
</dbReference>
<dbReference type="Pfam" id="PF00861">
    <property type="entry name" value="Ribosomal_L18p"/>
    <property type="match status" value="1"/>
</dbReference>
<dbReference type="SUPFAM" id="SSF53137">
    <property type="entry name" value="Translational machinery components"/>
    <property type="match status" value="1"/>
</dbReference>
<gene>
    <name evidence="1" type="primary">rplR</name>
    <name type="ordered locus">Mpe_A3427</name>
</gene>
<organism>
    <name type="scientific">Methylibium petroleiphilum (strain ATCC BAA-1232 / LMG 22953 / PM1)</name>
    <dbReference type="NCBI Taxonomy" id="420662"/>
    <lineage>
        <taxon>Bacteria</taxon>
        <taxon>Pseudomonadati</taxon>
        <taxon>Pseudomonadota</taxon>
        <taxon>Betaproteobacteria</taxon>
        <taxon>Burkholderiales</taxon>
        <taxon>Sphaerotilaceae</taxon>
        <taxon>Methylibium</taxon>
    </lineage>
</organism>